<gene>
    <name evidence="1" type="primary">recA</name>
    <name type="ordered locus">PPA1012</name>
</gene>
<reference key="1">
    <citation type="journal article" date="2004" name="Science">
        <title>The complete genome sequence of Propionibacterium acnes, a commensal of human skin.</title>
        <authorList>
            <person name="Brueggemann H."/>
            <person name="Henne A."/>
            <person name="Hoster F."/>
            <person name="Liesegang H."/>
            <person name="Wiezer A."/>
            <person name="Strittmatter A."/>
            <person name="Hujer S."/>
            <person name="Duerre P."/>
            <person name="Gottschalk G."/>
        </authorList>
    </citation>
    <scope>NUCLEOTIDE SEQUENCE [LARGE SCALE GENOMIC DNA]</scope>
    <source>
        <strain>DSM 16379 / KPA171202</strain>
    </source>
</reference>
<dbReference type="EMBL" id="AE017283">
    <property type="protein sequence ID" value="AAT82764.1"/>
    <property type="molecule type" value="Genomic_DNA"/>
</dbReference>
<dbReference type="RefSeq" id="WP_002515492.1">
    <property type="nucleotide sequence ID" value="NZ_CP025935.1"/>
</dbReference>
<dbReference type="SMR" id="P0CZ03"/>
<dbReference type="EnsemblBacteria" id="AAT82764">
    <property type="protein sequence ID" value="AAT82764"/>
    <property type="gene ID" value="PPA1012"/>
</dbReference>
<dbReference type="GeneID" id="92856980"/>
<dbReference type="KEGG" id="pac:PPA1012"/>
<dbReference type="eggNOG" id="COG0468">
    <property type="taxonomic scope" value="Bacteria"/>
</dbReference>
<dbReference type="HOGENOM" id="CLU_040469_1_2_11"/>
<dbReference type="Proteomes" id="UP000000603">
    <property type="component" value="Chromosome"/>
</dbReference>
<dbReference type="GO" id="GO:0005829">
    <property type="term" value="C:cytosol"/>
    <property type="evidence" value="ECO:0007669"/>
    <property type="project" value="TreeGrafter"/>
</dbReference>
<dbReference type="GO" id="GO:0005524">
    <property type="term" value="F:ATP binding"/>
    <property type="evidence" value="ECO:0007669"/>
    <property type="project" value="UniProtKB-UniRule"/>
</dbReference>
<dbReference type="GO" id="GO:0016887">
    <property type="term" value="F:ATP hydrolysis activity"/>
    <property type="evidence" value="ECO:0007669"/>
    <property type="project" value="InterPro"/>
</dbReference>
<dbReference type="GO" id="GO:0140664">
    <property type="term" value="F:ATP-dependent DNA damage sensor activity"/>
    <property type="evidence" value="ECO:0007669"/>
    <property type="project" value="InterPro"/>
</dbReference>
<dbReference type="GO" id="GO:0003684">
    <property type="term" value="F:damaged DNA binding"/>
    <property type="evidence" value="ECO:0007669"/>
    <property type="project" value="UniProtKB-UniRule"/>
</dbReference>
<dbReference type="GO" id="GO:0003697">
    <property type="term" value="F:single-stranded DNA binding"/>
    <property type="evidence" value="ECO:0007669"/>
    <property type="project" value="UniProtKB-UniRule"/>
</dbReference>
<dbReference type="GO" id="GO:0006310">
    <property type="term" value="P:DNA recombination"/>
    <property type="evidence" value="ECO:0007669"/>
    <property type="project" value="UniProtKB-UniRule"/>
</dbReference>
<dbReference type="GO" id="GO:0006281">
    <property type="term" value="P:DNA repair"/>
    <property type="evidence" value="ECO:0007669"/>
    <property type="project" value="UniProtKB-UniRule"/>
</dbReference>
<dbReference type="GO" id="GO:0009432">
    <property type="term" value="P:SOS response"/>
    <property type="evidence" value="ECO:0007669"/>
    <property type="project" value="UniProtKB-UniRule"/>
</dbReference>
<dbReference type="CDD" id="cd00983">
    <property type="entry name" value="RecA"/>
    <property type="match status" value="1"/>
</dbReference>
<dbReference type="FunFam" id="3.40.50.300:FF:000087">
    <property type="entry name" value="Recombinase RecA"/>
    <property type="match status" value="1"/>
</dbReference>
<dbReference type="Gene3D" id="3.40.50.300">
    <property type="entry name" value="P-loop containing nucleotide triphosphate hydrolases"/>
    <property type="match status" value="1"/>
</dbReference>
<dbReference type="HAMAP" id="MF_00268">
    <property type="entry name" value="RecA"/>
    <property type="match status" value="1"/>
</dbReference>
<dbReference type="InterPro" id="IPR003593">
    <property type="entry name" value="AAA+_ATPase"/>
</dbReference>
<dbReference type="InterPro" id="IPR013765">
    <property type="entry name" value="DNA_recomb/repair_RecA"/>
</dbReference>
<dbReference type="InterPro" id="IPR020584">
    <property type="entry name" value="DNA_recomb/repair_RecA_CS"/>
</dbReference>
<dbReference type="InterPro" id="IPR027417">
    <property type="entry name" value="P-loop_NTPase"/>
</dbReference>
<dbReference type="InterPro" id="IPR049261">
    <property type="entry name" value="RecA-like_C"/>
</dbReference>
<dbReference type="InterPro" id="IPR049428">
    <property type="entry name" value="RecA-like_N"/>
</dbReference>
<dbReference type="InterPro" id="IPR020588">
    <property type="entry name" value="RecA_ATP-bd"/>
</dbReference>
<dbReference type="InterPro" id="IPR023400">
    <property type="entry name" value="RecA_C_sf"/>
</dbReference>
<dbReference type="InterPro" id="IPR020587">
    <property type="entry name" value="RecA_monomer-monomer_interface"/>
</dbReference>
<dbReference type="NCBIfam" id="TIGR02012">
    <property type="entry name" value="tigrfam_recA"/>
    <property type="match status" value="1"/>
</dbReference>
<dbReference type="PANTHER" id="PTHR45900:SF1">
    <property type="entry name" value="MITOCHONDRIAL DNA REPAIR PROTEIN RECA HOMOLOG-RELATED"/>
    <property type="match status" value="1"/>
</dbReference>
<dbReference type="PANTHER" id="PTHR45900">
    <property type="entry name" value="RECA"/>
    <property type="match status" value="1"/>
</dbReference>
<dbReference type="Pfam" id="PF00154">
    <property type="entry name" value="RecA"/>
    <property type="match status" value="1"/>
</dbReference>
<dbReference type="Pfam" id="PF21096">
    <property type="entry name" value="RecA_C"/>
    <property type="match status" value="1"/>
</dbReference>
<dbReference type="PRINTS" id="PR00142">
    <property type="entry name" value="RECA"/>
</dbReference>
<dbReference type="SMART" id="SM00382">
    <property type="entry name" value="AAA"/>
    <property type="match status" value="1"/>
</dbReference>
<dbReference type="SUPFAM" id="SSF52540">
    <property type="entry name" value="P-loop containing nucleoside triphosphate hydrolases"/>
    <property type="match status" value="1"/>
</dbReference>
<dbReference type="SUPFAM" id="SSF54752">
    <property type="entry name" value="RecA protein, C-terminal domain"/>
    <property type="match status" value="1"/>
</dbReference>
<dbReference type="PROSITE" id="PS00321">
    <property type="entry name" value="RECA_1"/>
    <property type="match status" value="1"/>
</dbReference>
<dbReference type="PROSITE" id="PS50162">
    <property type="entry name" value="RECA_2"/>
    <property type="match status" value="1"/>
</dbReference>
<dbReference type="PROSITE" id="PS50163">
    <property type="entry name" value="RECA_3"/>
    <property type="match status" value="1"/>
</dbReference>
<protein>
    <recommendedName>
        <fullName evidence="1">Protein RecA</fullName>
    </recommendedName>
    <alternativeName>
        <fullName evidence="1">Recombinase A</fullName>
    </alternativeName>
</protein>
<sequence length="348" mass="37153">MAATADREKALATALQQIEKQHGKGSIMRLGEQETVKIAAIPTGSVALDVALGVGGLPRGRIVEIYGPESSGKTTVALHAIANAQAEGGICAFIDAEHALDPEYARKLGVDTDSLLVSQPDNGEQALEIADTLVRSGALELIVVDSVAALTPKAEIEGEMGDSHVGLQARLMSQALRKMTGALNAAGTTAIFINQLREKIGVMFGSPETTTGGRALKFYSSVRLDVRRVETLKDGSEMVGNRTRVKVAKNKVAPPFKQAEFDILYGQGISREGSLIDMGVDCGIITKSGSWFSYNNEQLGQGKENVRKFLRGNPDVANEIEDKILTHLGLREAEVPEGVDPRTGEVEF</sequence>
<evidence type="ECO:0000255" key="1">
    <source>
        <dbReference type="HAMAP-Rule" id="MF_00268"/>
    </source>
</evidence>
<name>RECA_CUTAK</name>
<organism>
    <name type="scientific">Cutibacterium acnes (strain DSM 16379 / KPA171202)</name>
    <name type="common">Propionibacterium acnes</name>
    <dbReference type="NCBI Taxonomy" id="267747"/>
    <lineage>
        <taxon>Bacteria</taxon>
        <taxon>Bacillati</taxon>
        <taxon>Actinomycetota</taxon>
        <taxon>Actinomycetes</taxon>
        <taxon>Propionibacteriales</taxon>
        <taxon>Propionibacteriaceae</taxon>
        <taxon>Cutibacterium</taxon>
    </lineage>
</organism>
<accession>P0CZ03</accession>
<accession>Q6A902</accession>
<feature type="chain" id="PRO_0000122795" description="Protein RecA">
    <location>
        <begin position="1"/>
        <end position="348"/>
    </location>
</feature>
<feature type="binding site" evidence="1">
    <location>
        <begin position="67"/>
        <end position="74"/>
    </location>
    <ligand>
        <name>ATP</name>
        <dbReference type="ChEBI" id="CHEBI:30616"/>
    </ligand>
</feature>
<keyword id="KW-0067">ATP-binding</keyword>
<keyword id="KW-0963">Cytoplasm</keyword>
<keyword id="KW-0227">DNA damage</keyword>
<keyword id="KW-0233">DNA recombination</keyword>
<keyword id="KW-0234">DNA repair</keyword>
<keyword id="KW-0238">DNA-binding</keyword>
<keyword id="KW-0547">Nucleotide-binding</keyword>
<keyword id="KW-0742">SOS response</keyword>
<proteinExistence type="inferred from homology"/>
<comment type="function">
    <text evidence="1">Can catalyze the hydrolysis of ATP in the presence of single-stranded DNA, the ATP-dependent uptake of single-stranded DNA by duplex DNA, and the ATP-dependent hybridization of homologous single-stranded DNAs. It interacts with LexA causing its activation and leading to its autocatalytic cleavage.</text>
</comment>
<comment type="subcellular location">
    <subcellularLocation>
        <location evidence="1">Cytoplasm</location>
    </subcellularLocation>
</comment>
<comment type="similarity">
    <text evidence="1">Belongs to the RecA family.</text>
</comment>